<protein>
    <recommendedName>
        <fullName evidence="1">ATP synthase epsilon chain</fullName>
    </recommendedName>
    <alternativeName>
        <fullName evidence="1">ATP synthase F1 sector epsilon subunit</fullName>
    </alternativeName>
    <alternativeName>
        <fullName evidence="1">F-ATPase epsilon subunit</fullName>
    </alternativeName>
</protein>
<feature type="chain" id="PRO_1000056532" description="ATP synthase epsilon chain">
    <location>
        <begin position="1"/>
        <end position="142"/>
    </location>
</feature>
<reference key="1">
    <citation type="submission" date="2007-07" db="EMBL/GenBank/DDBJ databases">
        <title>Complete sequence of chromosome of Shewanella baltica OS185.</title>
        <authorList>
            <consortium name="US DOE Joint Genome Institute"/>
            <person name="Copeland A."/>
            <person name="Lucas S."/>
            <person name="Lapidus A."/>
            <person name="Barry K."/>
            <person name="Glavina del Rio T."/>
            <person name="Dalin E."/>
            <person name="Tice H."/>
            <person name="Pitluck S."/>
            <person name="Sims D."/>
            <person name="Brettin T."/>
            <person name="Bruce D."/>
            <person name="Detter J.C."/>
            <person name="Han C."/>
            <person name="Schmutz J."/>
            <person name="Larimer F."/>
            <person name="Land M."/>
            <person name="Hauser L."/>
            <person name="Kyrpides N."/>
            <person name="Mikhailova N."/>
            <person name="Brettar I."/>
            <person name="Rodrigues J."/>
            <person name="Konstantinidis K."/>
            <person name="Tiedje J."/>
            <person name="Richardson P."/>
        </authorList>
    </citation>
    <scope>NUCLEOTIDE SEQUENCE [LARGE SCALE GENOMIC DNA]</scope>
    <source>
        <strain>OS185</strain>
    </source>
</reference>
<dbReference type="EMBL" id="CP000753">
    <property type="protein sequence ID" value="ABS10478.1"/>
    <property type="molecule type" value="Genomic_DNA"/>
</dbReference>
<dbReference type="RefSeq" id="WP_006083846.1">
    <property type="nucleotide sequence ID" value="NC_009665.1"/>
</dbReference>
<dbReference type="SMR" id="A6WUI9"/>
<dbReference type="GeneID" id="11775068"/>
<dbReference type="KEGG" id="sbm:Shew185_4364"/>
<dbReference type="HOGENOM" id="CLU_084338_2_0_6"/>
<dbReference type="GO" id="GO:0005886">
    <property type="term" value="C:plasma membrane"/>
    <property type="evidence" value="ECO:0007669"/>
    <property type="project" value="UniProtKB-SubCell"/>
</dbReference>
<dbReference type="GO" id="GO:0045259">
    <property type="term" value="C:proton-transporting ATP synthase complex"/>
    <property type="evidence" value="ECO:0007669"/>
    <property type="project" value="UniProtKB-KW"/>
</dbReference>
<dbReference type="GO" id="GO:0005524">
    <property type="term" value="F:ATP binding"/>
    <property type="evidence" value="ECO:0007669"/>
    <property type="project" value="UniProtKB-UniRule"/>
</dbReference>
<dbReference type="GO" id="GO:0046933">
    <property type="term" value="F:proton-transporting ATP synthase activity, rotational mechanism"/>
    <property type="evidence" value="ECO:0007669"/>
    <property type="project" value="UniProtKB-UniRule"/>
</dbReference>
<dbReference type="CDD" id="cd12152">
    <property type="entry name" value="F1-ATPase_delta"/>
    <property type="match status" value="1"/>
</dbReference>
<dbReference type="FunFam" id="1.20.5.440:FF:000001">
    <property type="entry name" value="ATP synthase epsilon chain"/>
    <property type="match status" value="1"/>
</dbReference>
<dbReference type="FunFam" id="2.60.15.10:FF:000001">
    <property type="entry name" value="ATP synthase epsilon chain"/>
    <property type="match status" value="1"/>
</dbReference>
<dbReference type="Gene3D" id="1.20.5.440">
    <property type="entry name" value="ATP synthase delta/epsilon subunit, C-terminal domain"/>
    <property type="match status" value="1"/>
</dbReference>
<dbReference type="Gene3D" id="2.60.15.10">
    <property type="entry name" value="F0F1 ATP synthase delta/epsilon subunit, N-terminal"/>
    <property type="match status" value="1"/>
</dbReference>
<dbReference type="HAMAP" id="MF_00530">
    <property type="entry name" value="ATP_synth_epsil_bac"/>
    <property type="match status" value="1"/>
</dbReference>
<dbReference type="InterPro" id="IPR036794">
    <property type="entry name" value="ATP_F1_dsu/esu_C_sf"/>
</dbReference>
<dbReference type="InterPro" id="IPR001469">
    <property type="entry name" value="ATP_synth_F1_dsu/esu"/>
</dbReference>
<dbReference type="InterPro" id="IPR020546">
    <property type="entry name" value="ATP_synth_F1_dsu/esu_N"/>
</dbReference>
<dbReference type="InterPro" id="IPR020547">
    <property type="entry name" value="ATP_synth_F1_esu_C"/>
</dbReference>
<dbReference type="InterPro" id="IPR036771">
    <property type="entry name" value="ATPsynth_dsu/esu_N"/>
</dbReference>
<dbReference type="NCBIfam" id="TIGR01216">
    <property type="entry name" value="ATP_synt_epsi"/>
    <property type="match status" value="1"/>
</dbReference>
<dbReference type="NCBIfam" id="NF001847">
    <property type="entry name" value="PRK00571.1-4"/>
    <property type="match status" value="1"/>
</dbReference>
<dbReference type="PANTHER" id="PTHR13822">
    <property type="entry name" value="ATP SYNTHASE DELTA/EPSILON CHAIN"/>
    <property type="match status" value="1"/>
</dbReference>
<dbReference type="PANTHER" id="PTHR13822:SF10">
    <property type="entry name" value="ATP SYNTHASE EPSILON CHAIN, CHLOROPLASTIC"/>
    <property type="match status" value="1"/>
</dbReference>
<dbReference type="Pfam" id="PF00401">
    <property type="entry name" value="ATP-synt_DE"/>
    <property type="match status" value="1"/>
</dbReference>
<dbReference type="Pfam" id="PF02823">
    <property type="entry name" value="ATP-synt_DE_N"/>
    <property type="match status" value="1"/>
</dbReference>
<dbReference type="SUPFAM" id="SSF46604">
    <property type="entry name" value="Epsilon subunit of F1F0-ATP synthase C-terminal domain"/>
    <property type="match status" value="1"/>
</dbReference>
<dbReference type="SUPFAM" id="SSF51344">
    <property type="entry name" value="Epsilon subunit of F1F0-ATP synthase N-terminal domain"/>
    <property type="match status" value="1"/>
</dbReference>
<accession>A6WUI9</accession>
<evidence type="ECO:0000255" key="1">
    <source>
        <dbReference type="HAMAP-Rule" id="MF_00530"/>
    </source>
</evidence>
<organism>
    <name type="scientific">Shewanella baltica (strain OS185)</name>
    <dbReference type="NCBI Taxonomy" id="402882"/>
    <lineage>
        <taxon>Bacteria</taxon>
        <taxon>Pseudomonadati</taxon>
        <taxon>Pseudomonadota</taxon>
        <taxon>Gammaproteobacteria</taxon>
        <taxon>Alteromonadales</taxon>
        <taxon>Shewanellaceae</taxon>
        <taxon>Shewanella</taxon>
    </lineage>
</organism>
<gene>
    <name evidence="1" type="primary">atpC</name>
    <name type="ordered locus">Shew185_4364</name>
</gene>
<comment type="function">
    <text evidence="1">Produces ATP from ADP in the presence of a proton gradient across the membrane.</text>
</comment>
<comment type="subunit">
    <text evidence="1">F-type ATPases have 2 components, CF(1) - the catalytic core - and CF(0) - the membrane proton channel. CF(1) has five subunits: alpha(3), beta(3), gamma(1), delta(1), epsilon(1). CF(0) has three main subunits: a, b and c.</text>
</comment>
<comment type="subcellular location">
    <subcellularLocation>
        <location evidence="1">Cell inner membrane</location>
        <topology evidence="1">Peripheral membrane protein</topology>
    </subcellularLocation>
</comment>
<comment type="similarity">
    <text evidence="1">Belongs to the ATPase epsilon chain family.</text>
</comment>
<sequence length="142" mass="15227">MAAMTVHLDIVSAESKIFSGRVASLQVTGSEGELGIMHGHAPLLSYIKPGMARIVKQDGSEEVFYLSGGILEVQPSTVSVLADVVMRAKDIDEQAALEAKRRAEAHMANAGADFNYDAAMVELAKAMAQLRVVETIKKNIAR</sequence>
<keyword id="KW-0066">ATP synthesis</keyword>
<keyword id="KW-0997">Cell inner membrane</keyword>
<keyword id="KW-1003">Cell membrane</keyword>
<keyword id="KW-0139">CF(1)</keyword>
<keyword id="KW-0375">Hydrogen ion transport</keyword>
<keyword id="KW-0406">Ion transport</keyword>
<keyword id="KW-0472">Membrane</keyword>
<keyword id="KW-0813">Transport</keyword>
<proteinExistence type="inferred from homology"/>
<name>ATPE_SHEB8</name>